<comment type="function">
    <text evidence="1">Demethylates proteins that have been reversibly carboxymethylated. Demethylates the phosphatase PP2A catalytic subunit (By similarity).</text>
</comment>
<comment type="catalytic activity">
    <reaction>
        <text>[phosphatase 2A protein]-C-terminal L-leucine methyl ester + H2O = [phosphatase 2A protein]-C-terminal L-leucine + methanol + H(+)</text>
        <dbReference type="Rhea" id="RHEA:48548"/>
        <dbReference type="Rhea" id="RHEA-COMP:12134"/>
        <dbReference type="Rhea" id="RHEA-COMP:12135"/>
        <dbReference type="ChEBI" id="CHEBI:15377"/>
        <dbReference type="ChEBI" id="CHEBI:15378"/>
        <dbReference type="ChEBI" id="CHEBI:17790"/>
        <dbReference type="ChEBI" id="CHEBI:90516"/>
        <dbReference type="ChEBI" id="CHEBI:90517"/>
        <dbReference type="EC" id="3.1.1.89"/>
    </reaction>
</comment>
<comment type="similarity">
    <text evidence="3">Belongs to the AB hydrolase superfamily.</text>
</comment>
<reference key="1">
    <citation type="journal article" date="2004" name="Nature">
        <title>Genome evolution in yeasts.</title>
        <authorList>
            <person name="Dujon B."/>
            <person name="Sherman D."/>
            <person name="Fischer G."/>
            <person name="Durrens P."/>
            <person name="Casaregola S."/>
            <person name="Lafontaine I."/>
            <person name="de Montigny J."/>
            <person name="Marck C."/>
            <person name="Neuveglise C."/>
            <person name="Talla E."/>
            <person name="Goffard N."/>
            <person name="Frangeul L."/>
            <person name="Aigle M."/>
            <person name="Anthouard V."/>
            <person name="Babour A."/>
            <person name="Barbe V."/>
            <person name="Barnay S."/>
            <person name="Blanchin S."/>
            <person name="Beckerich J.-M."/>
            <person name="Beyne E."/>
            <person name="Bleykasten C."/>
            <person name="Boisrame A."/>
            <person name="Boyer J."/>
            <person name="Cattolico L."/>
            <person name="Confanioleri F."/>
            <person name="de Daruvar A."/>
            <person name="Despons L."/>
            <person name="Fabre E."/>
            <person name="Fairhead C."/>
            <person name="Ferry-Dumazet H."/>
            <person name="Groppi A."/>
            <person name="Hantraye F."/>
            <person name="Hennequin C."/>
            <person name="Jauniaux N."/>
            <person name="Joyet P."/>
            <person name="Kachouri R."/>
            <person name="Kerrest A."/>
            <person name="Koszul R."/>
            <person name="Lemaire M."/>
            <person name="Lesur I."/>
            <person name="Ma L."/>
            <person name="Muller H."/>
            <person name="Nicaud J.-M."/>
            <person name="Nikolski M."/>
            <person name="Oztas S."/>
            <person name="Ozier-Kalogeropoulos O."/>
            <person name="Pellenz S."/>
            <person name="Potier S."/>
            <person name="Richard G.-F."/>
            <person name="Straub M.-L."/>
            <person name="Suleau A."/>
            <person name="Swennen D."/>
            <person name="Tekaia F."/>
            <person name="Wesolowski-Louvel M."/>
            <person name="Westhof E."/>
            <person name="Wirth B."/>
            <person name="Zeniou-Meyer M."/>
            <person name="Zivanovic Y."/>
            <person name="Bolotin-Fukuhara M."/>
            <person name="Thierry A."/>
            <person name="Bouchier C."/>
            <person name="Caudron B."/>
            <person name="Scarpelli C."/>
            <person name="Gaillardin C."/>
            <person name="Weissenbach J."/>
            <person name="Wincker P."/>
            <person name="Souciet J.-L."/>
        </authorList>
    </citation>
    <scope>NUCLEOTIDE SEQUENCE [LARGE SCALE GENOMIC DNA]</scope>
    <source>
        <strain>CLIB 122 / E 150</strain>
    </source>
</reference>
<gene>
    <name type="primary">PPE1</name>
    <name type="ordered locus">YALI0A20086g</name>
</gene>
<evidence type="ECO:0000250" key="1"/>
<evidence type="ECO:0000256" key="2">
    <source>
        <dbReference type="SAM" id="MobiDB-lite"/>
    </source>
</evidence>
<evidence type="ECO:0000305" key="3"/>
<protein>
    <recommendedName>
        <fullName>Protein phosphatase methylesterase 1</fullName>
        <shortName>PME-1</shortName>
        <ecNumber>3.1.1.89</ecNumber>
    </recommendedName>
</protein>
<keyword id="KW-0378">Hydrolase</keyword>
<keyword id="KW-1185">Reference proteome</keyword>
<keyword id="KW-0719">Serine esterase</keyword>
<dbReference type="EC" id="3.1.1.89"/>
<dbReference type="EMBL" id="CR382127">
    <property type="protein sequence ID" value="CAG84209.1"/>
    <property type="molecule type" value="Genomic_DNA"/>
</dbReference>
<dbReference type="RefSeq" id="XP_500271.1">
    <property type="nucleotide sequence ID" value="XM_500271.1"/>
</dbReference>
<dbReference type="SMR" id="Q6CGE1"/>
<dbReference type="FunCoup" id="Q6CGE1">
    <property type="interactions" value="873"/>
</dbReference>
<dbReference type="STRING" id="284591.Q6CGE1"/>
<dbReference type="ESTHER" id="yarli-ppme1">
    <property type="family name" value="PPase_methylesterase_euk"/>
</dbReference>
<dbReference type="MEROPS" id="S33.B12"/>
<dbReference type="EnsemblFungi" id="CAG84209">
    <property type="protein sequence ID" value="CAG84209"/>
    <property type="gene ID" value="YALI0_A20086g"/>
</dbReference>
<dbReference type="KEGG" id="yli:2906043"/>
<dbReference type="VEuPathDB" id="FungiDB:YALI0_A20086g"/>
<dbReference type="HOGENOM" id="CLU_024818_3_1_1"/>
<dbReference type="InParanoid" id="Q6CGE1"/>
<dbReference type="OMA" id="VMVCHHG"/>
<dbReference type="OrthoDB" id="25348at4891"/>
<dbReference type="Proteomes" id="UP000001300">
    <property type="component" value="Chromosome A"/>
</dbReference>
<dbReference type="GO" id="GO:0005763">
    <property type="term" value="C:mitochondrial small ribosomal subunit"/>
    <property type="evidence" value="ECO:0007669"/>
    <property type="project" value="EnsemblFungi"/>
</dbReference>
<dbReference type="GO" id="GO:0051722">
    <property type="term" value="F:protein C-terminal methylesterase activity"/>
    <property type="evidence" value="ECO:0000318"/>
    <property type="project" value="GO_Central"/>
</dbReference>
<dbReference type="Gene3D" id="3.40.50.1820">
    <property type="entry name" value="alpha/beta hydrolase"/>
    <property type="match status" value="1"/>
</dbReference>
<dbReference type="InterPro" id="IPR000073">
    <property type="entry name" value="AB_hydrolase_1"/>
</dbReference>
<dbReference type="InterPro" id="IPR029058">
    <property type="entry name" value="AB_hydrolase_fold"/>
</dbReference>
<dbReference type="InterPro" id="IPR016812">
    <property type="entry name" value="PPase_methylesterase_euk"/>
</dbReference>
<dbReference type="PANTHER" id="PTHR14189:SF0">
    <property type="entry name" value="PROTEIN PHOSPHATASE METHYLESTERASE 1"/>
    <property type="match status" value="1"/>
</dbReference>
<dbReference type="PANTHER" id="PTHR14189">
    <property type="entry name" value="PROTEIN PHOSPHATASE METHYLESTERASE-1 RELATED"/>
    <property type="match status" value="1"/>
</dbReference>
<dbReference type="Pfam" id="PF12697">
    <property type="entry name" value="Abhydrolase_6"/>
    <property type="match status" value="1"/>
</dbReference>
<dbReference type="PIRSF" id="PIRSF022950">
    <property type="entry name" value="PPase_methylesterase_euk"/>
    <property type="match status" value="1"/>
</dbReference>
<dbReference type="SUPFAM" id="SSF53474">
    <property type="entry name" value="alpha/beta-Hydrolases"/>
    <property type="match status" value="1"/>
</dbReference>
<sequence>MSQLHRGMHKKPGMFPPKEVLEEVDAGSGSDTETEETVECTEEEEEQDETDGLGDLGMPPPKKTTKSAASPTVPAPALIPSLSHLIGLEGKQPSRKYAPAEWPQYFKQKISVARDNDTFNVLYTPPDDSEAPVYVFHHGAGSCAESFALLSVRLREMMHEERFQLAATAKIRDENKLPGMIAFDARGHGFTEVESTDYSLEAFTNDFAFIVANVVAEFGLTNNLILVGHSLGGAVVTNACHLKLIQHPVIGLAVLDVVEGTAIESLASMQQILNSRPKSFPTVEKGIEWTVQSHTIRNRESACVSVPPTLISQHDGPGMTWRTDLMLTKPYWKGWFTGLSEKFISCAPAKLLILAGTDRLDKDLMVGQMQGKYQLIVFQESGHFVQEDAPDKTALSLIDFWKRNDKVNKTVPLFGAFRA</sequence>
<feature type="chain" id="PRO_0000223670" description="Protein phosphatase methylesterase 1">
    <location>
        <begin position="1"/>
        <end position="419"/>
    </location>
</feature>
<feature type="region of interest" description="Disordered" evidence="2">
    <location>
        <begin position="1"/>
        <end position="75"/>
    </location>
</feature>
<feature type="compositionally biased region" description="Basic residues" evidence="2">
    <location>
        <begin position="1"/>
        <end position="12"/>
    </location>
</feature>
<feature type="compositionally biased region" description="Acidic residues" evidence="2">
    <location>
        <begin position="32"/>
        <end position="52"/>
    </location>
</feature>
<feature type="active site" evidence="1">
    <location>
        <position position="230"/>
    </location>
</feature>
<feature type="active site" evidence="1">
    <location>
        <position position="256"/>
    </location>
</feature>
<feature type="active site" evidence="1">
    <location>
        <position position="383"/>
    </location>
</feature>
<organism>
    <name type="scientific">Yarrowia lipolytica (strain CLIB 122 / E 150)</name>
    <name type="common">Yeast</name>
    <name type="synonym">Candida lipolytica</name>
    <dbReference type="NCBI Taxonomy" id="284591"/>
    <lineage>
        <taxon>Eukaryota</taxon>
        <taxon>Fungi</taxon>
        <taxon>Dikarya</taxon>
        <taxon>Ascomycota</taxon>
        <taxon>Saccharomycotina</taxon>
        <taxon>Dipodascomycetes</taxon>
        <taxon>Dipodascales</taxon>
        <taxon>Dipodascales incertae sedis</taxon>
        <taxon>Yarrowia</taxon>
    </lineage>
</organism>
<name>PPME1_YARLI</name>
<proteinExistence type="inferred from homology"/>
<accession>Q6CGE1</accession>